<gene>
    <name type="primary">MMP21</name>
</gene>
<proteinExistence type="evidence at transcript level"/>
<feature type="signal peptide" evidence="2">
    <location>
        <begin position="1"/>
        <end position="24"/>
    </location>
</feature>
<feature type="propeptide" id="PRO_0000028839" evidence="1">
    <location>
        <begin position="25"/>
        <end position="144"/>
    </location>
</feature>
<feature type="chain" id="PRO_0000028840" description="Matrix metalloproteinase-21">
    <location>
        <begin position="145"/>
        <end position="569"/>
    </location>
</feature>
<feature type="repeat" description="Hemopexin 1">
    <location>
        <begin position="330"/>
        <end position="389"/>
    </location>
</feature>
<feature type="repeat" description="Hemopexin 2">
    <location>
        <begin position="391"/>
        <end position="447"/>
    </location>
</feature>
<feature type="repeat" description="Hemopexin 3">
    <location>
        <begin position="448"/>
        <end position="496"/>
    </location>
</feature>
<feature type="repeat" description="Hemopexin 4">
    <location>
        <begin position="503"/>
        <end position="559"/>
    </location>
</feature>
<feature type="region of interest" description="Disordered" evidence="4">
    <location>
        <begin position="115"/>
        <end position="166"/>
    </location>
</feature>
<feature type="short sequence motif" description="Cysteine switch" evidence="1">
    <location>
        <begin position="115"/>
        <end position="122"/>
    </location>
</feature>
<feature type="compositionally biased region" description="Pro residues" evidence="4">
    <location>
        <begin position="122"/>
        <end position="139"/>
    </location>
</feature>
<feature type="compositionally biased region" description="Low complexity" evidence="4">
    <location>
        <begin position="147"/>
        <end position="156"/>
    </location>
</feature>
<feature type="active site" evidence="3">
    <location>
        <position position="284"/>
    </location>
</feature>
<feature type="binding site" description="in inhibited form" evidence="1">
    <location>
        <position position="117"/>
    </location>
    <ligand>
        <name>Zn(2+)</name>
        <dbReference type="ChEBI" id="CHEBI:29105"/>
        <note>catalytic</note>
    </ligand>
</feature>
<feature type="binding site" evidence="3">
    <location>
        <position position="283"/>
    </location>
    <ligand>
        <name>Zn(2+)</name>
        <dbReference type="ChEBI" id="CHEBI:29105"/>
        <note>catalytic</note>
    </ligand>
</feature>
<feature type="binding site" evidence="3">
    <location>
        <position position="287"/>
    </location>
    <ligand>
        <name>Zn(2+)</name>
        <dbReference type="ChEBI" id="CHEBI:29105"/>
        <note>catalytic</note>
    </ligand>
</feature>
<feature type="binding site" evidence="3">
    <location>
        <position position="293"/>
    </location>
    <ligand>
        <name>Zn(2+)</name>
        <dbReference type="ChEBI" id="CHEBI:29105"/>
        <note>catalytic</note>
    </ligand>
</feature>
<feature type="glycosylation site" description="N-linked (GlcNAc...) asparagine" evidence="2">
    <location>
        <position position="372"/>
    </location>
</feature>
<feature type="disulfide bond" evidence="1">
    <location>
        <begin position="329"/>
        <end position="560"/>
    </location>
</feature>
<feature type="sequence variant" id="VAR_076319" description="In HTX7; dbSNP:rs746379956." evidence="8">
    <original>R</original>
    <variation>W</variation>
    <location>
        <position position="31"/>
    </location>
</feature>
<feature type="sequence variant" id="VAR_022291" description="In dbSNP:rs28381282." evidence="10">
    <original>A</original>
    <variation>E</variation>
    <location>
        <position position="95"/>
    </location>
</feature>
<feature type="sequence variant" id="VAR_022292" description="In dbSNP:rs28381284." evidence="10">
    <original>P</original>
    <variation>Q</variation>
    <location>
        <position position="115"/>
    </location>
</feature>
<feature type="sequence variant" id="VAR_019393" description="In dbSNP:rs10901425." evidence="6 10">
    <original>V</original>
    <variation>A</variation>
    <location>
        <position position="191"/>
    </location>
</feature>
<feature type="sequence variant" id="VAR_076320" description="In HTX7; dbSNP:rs145789868." evidence="8">
    <original>E</original>
    <variation>K</variation>
    <location>
        <position position="215"/>
    </location>
</feature>
<feature type="sequence variant" id="VAR_076321" description="In HTX7; dbSNP:rs781127723." evidence="8">
    <original>I</original>
    <variation>T</variation>
    <location>
        <position position="226"/>
    </location>
</feature>
<feature type="sequence variant" id="VAR_032824" description="In dbSNP:rs34811493.">
    <original>D</original>
    <variation>E</variation>
    <location>
        <position position="263"/>
    </location>
</feature>
<feature type="sequence variant" id="VAR_076322" description="In HTX7; dbSNP:rs1434829861." evidence="9">
    <original>H</original>
    <variation>Y</variation>
    <location>
        <position position="283"/>
    </location>
</feature>
<feature type="sequence variant" id="VAR_076323" description="In HTX7; dbSNP:rs747668147." evidence="9">
    <original>I</original>
    <variation>T</variation>
    <location>
        <position position="285"/>
    </location>
</feature>
<feature type="sequence variant" id="VAR_057803" description="In dbSNP:rs17173746.">
    <original>A</original>
    <variation>T</variation>
    <location>
        <position position="311"/>
    </location>
</feature>
<feature type="sequence variant" id="VAR_076324" description="In HTX7; dbSNP:rs773125891." evidence="8">
    <original>A</original>
    <variation>P</variation>
    <location>
        <position position="321"/>
    </location>
</feature>
<feature type="sequence variant" id="VAR_022293" description="In dbSNP:rs28381302." evidence="10">
    <original>E</original>
    <variation>G</variation>
    <location>
        <position position="349"/>
    </location>
</feature>
<feature type="sequence variant" id="VAR_076325" description="In HTX7; dbSNP:rs946722250." evidence="8">
    <original>R</original>
    <variation>C</variation>
    <location>
        <position position="360"/>
    </location>
</feature>
<feature type="sequence variant" id="VAR_057804" description="In dbSNP:rs17153524.">
    <original>R</original>
    <variation>H</variation>
    <location>
        <position position="360"/>
    </location>
</feature>
<feature type="sequence variant" id="VAR_076326" description="In HTX7." evidence="8">
    <original>R</original>
    <variation>H</variation>
    <location>
        <position position="375"/>
    </location>
</feature>
<feature type="sequence variant" id="VAR_076327" description="In HTX7; uncertain significance; dbSNP:rs150320323." evidence="8">
    <original>R</original>
    <variation>G</variation>
    <location>
        <position position="408"/>
    </location>
</feature>
<feature type="sequence variant" id="VAR_022294" description="In dbSNP:rs28381319." evidence="10">
    <original>A</original>
    <variation>V</variation>
    <location>
        <position position="454"/>
    </location>
</feature>
<comment type="function">
    <text evidence="6 7 8">Plays a specialized role in the generation of left-right asymmetry during embryogenesis. May act as a negative regulator of the NOTCH-signaling pathway (PubMed:26429889, PubMed:26437028). Cleaves alpha-1-antitrypsin (PubMed:12617721).</text>
</comment>
<comment type="cofactor">
    <cofactor evidence="1">
        <name>Zn(2+)</name>
        <dbReference type="ChEBI" id="CHEBI:29105"/>
    </cofactor>
    <text evidence="1">Binds 1 zinc ion per subunit.</text>
</comment>
<comment type="cofactor">
    <cofactor evidence="1">
        <name>Ca(2+)</name>
        <dbReference type="ChEBI" id="CHEBI:29108"/>
    </cofactor>
</comment>
<comment type="subcellular location">
    <subcellularLocation>
        <location evidence="11">Secreted</location>
    </subcellularLocation>
</comment>
<comment type="tissue specificity">
    <text evidence="5 6">Identified in fetal brain, kidney and liver. In adult tissues found primarily in ovary, kidney, liver, lung, placenta, brain and peripheral blood leukocytes. Expressed as well in various cancer cell lines.</text>
</comment>
<comment type="domain">
    <text>The conserved cysteine present in the cysteine-switch motif binds the catalytic zinc ion, thus inhibiting the enzyme. The dissociation of the cysteine from the zinc ion upon the activation-peptide release activates the enzyme.</text>
</comment>
<comment type="PTM">
    <text evidence="1">The precursor is cleaved by a furin endopeptidase.</text>
</comment>
<comment type="disease" evidence="7 8 9">
    <disease id="DI-04636">
        <name>Heterotaxy, visceral, 7, autosomal</name>
        <acronym>HTX7</acronym>
        <description>A form of visceral heterotaxy, a complex disorder due to disruption of the normal left-right asymmetry of the thoracoabdominal organs. Visceral heterotaxy or situs ambiguus results in randomization of the placement of visceral organs, including the heart, lungs, liver, spleen, and stomach. The organs are oriented randomly with respect to the left-right axis and with respect to one another. It can be associated with a variety of congenital defects including cardiac malformations. HTX7 inheritance is autosomal recessive.</description>
        <dbReference type="MIM" id="616749"/>
    </disease>
    <text>The disease is caused by variants affecting the gene represented in this entry.</text>
</comment>
<comment type="similarity">
    <text evidence="11">Belongs to the peptidase M10A family.</text>
</comment>
<evidence type="ECO:0000250" key="1"/>
<evidence type="ECO:0000255" key="2"/>
<evidence type="ECO:0000255" key="3">
    <source>
        <dbReference type="PROSITE-ProRule" id="PRU10095"/>
    </source>
</evidence>
<evidence type="ECO:0000256" key="4">
    <source>
        <dbReference type="SAM" id="MobiDB-lite"/>
    </source>
</evidence>
<evidence type="ECO:0000269" key="5">
    <source>
    </source>
</evidence>
<evidence type="ECO:0000269" key="6">
    <source>
    </source>
</evidence>
<evidence type="ECO:0000269" key="7">
    <source>
    </source>
</evidence>
<evidence type="ECO:0000269" key="8">
    <source>
    </source>
</evidence>
<evidence type="ECO:0000269" key="9">
    <source>
    </source>
</evidence>
<evidence type="ECO:0000269" key="10">
    <source ref="3"/>
</evidence>
<evidence type="ECO:0000305" key="11"/>
<reference key="1">
    <citation type="journal article" date="2002" name="Gene">
        <title>Matrix metalloproteinase-21, the human orthologue for XMMP, is expressed during fetal development and in cancer.</title>
        <authorList>
            <person name="Ahokas K."/>
            <person name="Lohi J."/>
            <person name="Lohi H."/>
            <person name="Elomaa O."/>
            <person name="Karjalainen-Lindsberg M.-L."/>
            <person name="Kere J."/>
            <person name="Saarialho-Kere U."/>
        </authorList>
    </citation>
    <scope>NUCLEOTIDE SEQUENCE [MRNA]</scope>
    <scope>TISSUE SPECIFICITY</scope>
</reference>
<reference key="2">
    <citation type="journal article" date="2003" name="Biochem. J.">
        <title>The structure and regulation of the human and mouse matrix metalloproteinase-21 gene and protein.</title>
        <authorList>
            <person name="Marchenko G.N."/>
            <person name="Marchenko N.D."/>
            <person name="Strongin A.Y."/>
        </authorList>
    </citation>
    <scope>NUCLEOTIDE SEQUENCE [GENOMIC DNA / MRNA]</scope>
    <scope>FUNCTION</scope>
    <scope>TISSUE SPECIFICITY</scope>
    <scope>VARIANT ALA-191</scope>
    <source>
        <tissue>Kidney</tissue>
    </source>
</reference>
<reference key="3">
    <citation type="submission" date="2005-01" db="EMBL/GenBank/DDBJ databases">
        <authorList>
            <consortium name="NIEHS SNPs program"/>
        </authorList>
    </citation>
    <scope>NUCLEOTIDE SEQUENCE [GENOMIC DNA]</scope>
    <scope>VARIANTS GLU-95; GLN-115; ALA-191; GLY-349 AND VAL-454</scope>
</reference>
<reference key="4">
    <citation type="journal article" date="2004" name="Nature">
        <title>The DNA sequence and comparative analysis of human chromosome 10.</title>
        <authorList>
            <person name="Deloukas P."/>
            <person name="Earthrowl M.E."/>
            <person name="Grafham D.V."/>
            <person name="Rubenfield M."/>
            <person name="French L."/>
            <person name="Steward C.A."/>
            <person name="Sims S.K."/>
            <person name="Jones M.C."/>
            <person name="Searle S."/>
            <person name="Scott C."/>
            <person name="Howe K."/>
            <person name="Hunt S.E."/>
            <person name="Andrews T.D."/>
            <person name="Gilbert J.G.R."/>
            <person name="Swarbreck D."/>
            <person name="Ashurst J.L."/>
            <person name="Taylor A."/>
            <person name="Battles J."/>
            <person name="Bird C.P."/>
            <person name="Ainscough R."/>
            <person name="Almeida J.P."/>
            <person name="Ashwell R.I.S."/>
            <person name="Ambrose K.D."/>
            <person name="Babbage A.K."/>
            <person name="Bagguley C.L."/>
            <person name="Bailey J."/>
            <person name="Banerjee R."/>
            <person name="Bates K."/>
            <person name="Beasley H."/>
            <person name="Bray-Allen S."/>
            <person name="Brown A.J."/>
            <person name="Brown J.Y."/>
            <person name="Burford D.C."/>
            <person name="Burrill W."/>
            <person name="Burton J."/>
            <person name="Cahill P."/>
            <person name="Camire D."/>
            <person name="Carter N.P."/>
            <person name="Chapman J.C."/>
            <person name="Clark S.Y."/>
            <person name="Clarke G."/>
            <person name="Clee C.M."/>
            <person name="Clegg S."/>
            <person name="Corby N."/>
            <person name="Coulson A."/>
            <person name="Dhami P."/>
            <person name="Dutta I."/>
            <person name="Dunn M."/>
            <person name="Faulkner L."/>
            <person name="Frankish A."/>
            <person name="Frankland J.A."/>
            <person name="Garner P."/>
            <person name="Garnett J."/>
            <person name="Gribble S."/>
            <person name="Griffiths C."/>
            <person name="Grocock R."/>
            <person name="Gustafson E."/>
            <person name="Hammond S."/>
            <person name="Harley J.L."/>
            <person name="Hart E."/>
            <person name="Heath P.D."/>
            <person name="Ho T.P."/>
            <person name="Hopkins B."/>
            <person name="Horne J."/>
            <person name="Howden P.J."/>
            <person name="Huckle E."/>
            <person name="Hynds C."/>
            <person name="Johnson C."/>
            <person name="Johnson D."/>
            <person name="Kana A."/>
            <person name="Kay M."/>
            <person name="Kimberley A.M."/>
            <person name="Kershaw J.K."/>
            <person name="Kokkinaki M."/>
            <person name="Laird G.K."/>
            <person name="Lawlor S."/>
            <person name="Lee H.M."/>
            <person name="Leongamornlert D.A."/>
            <person name="Laird G."/>
            <person name="Lloyd C."/>
            <person name="Lloyd D.M."/>
            <person name="Loveland J."/>
            <person name="Lovell J."/>
            <person name="McLaren S."/>
            <person name="McLay K.E."/>
            <person name="McMurray A."/>
            <person name="Mashreghi-Mohammadi M."/>
            <person name="Matthews L."/>
            <person name="Milne S."/>
            <person name="Nickerson T."/>
            <person name="Nguyen M."/>
            <person name="Overton-Larty E."/>
            <person name="Palmer S.A."/>
            <person name="Pearce A.V."/>
            <person name="Peck A.I."/>
            <person name="Pelan S."/>
            <person name="Phillimore B."/>
            <person name="Porter K."/>
            <person name="Rice C.M."/>
            <person name="Rogosin A."/>
            <person name="Ross M.T."/>
            <person name="Sarafidou T."/>
            <person name="Sehra H.K."/>
            <person name="Shownkeen R."/>
            <person name="Skuce C.D."/>
            <person name="Smith M."/>
            <person name="Standring L."/>
            <person name="Sycamore N."/>
            <person name="Tester J."/>
            <person name="Thorpe A."/>
            <person name="Torcasso W."/>
            <person name="Tracey A."/>
            <person name="Tromans A."/>
            <person name="Tsolas J."/>
            <person name="Wall M."/>
            <person name="Walsh J."/>
            <person name="Wang H."/>
            <person name="Weinstock K."/>
            <person name="West A.P."/>
            <person name="Willey D.L."/>
            <person name="Whitehead S.L."/>
            <person name="Wilming L."/>
            <person name="Wray P.W."/>
            <person name="Young L."/>
            <person name="Chen Y."/>
            <person name="Lovering R.C."/>
            <person name="Moschonas N.K."/>
            <person name="Siebert R."/>
            <person name="Fechtel K."/>
            <person name="Bentley D."/>
            <person name="Durbin R.M."/>
            <person name="Hubbard T."/>
            <person name="Doucette-Stamm L."/>
            <person name="Beck S."/>
            <person name="Smith D.R."/>
            <person name="Rogers J."/>
        </authorList>
    </citation>
    <scope>NUCLEOTIDE SEQUENCE [LARGE SCALE GENOMIC DNA]</scope>
</reference>
<reference key="5">
    <citation type="journal article" date="2015" name="J. Med. Genet.">
        <title>A human laterality disorder caused by a homozygous deleterious mutation in MMP21.</title>
        <authorList>
            <person name="Perles Z."/>
            <person name="Moon S."/>
            <person name="Ta-Shma A."/>
            <person name="Yaacov B."/>
            <person name="Francescatto L."/>
            <person name="Edvardson S."/>
            <person name="Rein A.J."/>
            <person name="Elpeleg O."/>
            <person name="Katsanis N."/>
        </authorList>
    </citation>
    <scope>INVOLVEMENT IN HTX7</scope>
    <scope>FUNCTION</scope>
</reference>
<reference key="6">
    <citation type="journal article" date="2015" name="Nat. Genet.">
        <title>MMP21 is mutated in human heterotaxy and is required for normal left-right asymmetry in vertebrates.</title>
        <authorList>
            <person name="Guimier A."/>
            <person name="Gabriel G.C."/>
            <person name="Bajolle F."/>
            <person name="Tsang M."/>
            <person name="Liu H."/>
            <person name="Noll A."/>
            <person name="Schwartz M."/>
            <person name="El Malti R."/>
            <person name="Smith L.D."/>
            <person name="Klena N.T."/>
            <person name="Jimenez G."/>
            <person name="Miller N.A."/>
            <person name="Oufadem M."/>
            <person name="Moreau de Bellaing A."/>
            <person name="Yagi H."/>
            <person name="Saunders C.J."/>
            <person name="Baker C.N."/>
            <person name="Di Filippo S."/>
            <person name="Peterson K.A."/>
            <person name="Thiffault I."/>
            <person name="Bole-Feysot C."/>
            <person name="Cooley L.D."/>
            <person name="Farrow E.G."/>
            <person name="Masson C."/>
            <person name="Schoen P."/>
            <person name="Deleuze J.F."/>
            <person name="Nitschke P."/>
            <person name="Lyonnet S."/>
            <person name="de Pontual L."/>
            <person name="Murray S.A."/>
            <person name="Bonnet D."/>
            <person name="Kingsmore S.F."/>
            <person name="Amiel J."/>
            <person name="Bouvagnet P."/>
            <person name="Lo C.W."/>
            <person name="Gordon C.T."/>
        </authorList>
    </citation>
    <scope>INVOLVEMENT IN HTX7</scope>
    <scope>VARIANTS HTX7 TRP-31; LYS-215; THR-226; PRO-321; CYS-360; HIS-375 AND GLY-408</scope>
    <scope>FUNCTION</scope>
</reference>
<reference key="7">
    <citation type="journal article" date="2015" name="Nat. Genet.">
        <title>Discovery of four recessive developmental disorders using probabilistic genotype and phenotype matching among 4,125 families.</title>
        <authorList>
            <consortium name="DDD study"/>
            <person name="Akawi N."/>
            <person name="McRae J."/>
            <person name="Ansari M."/>
            <person name="Balasubramanian M."/>
            <person name="Blyth M."/>
            <person name="Brady A.F."/>
            <person name="Clayton S."/>
            <person name="Cole T."/>
            <person name="Deshpande C."/>
            <person name="Fitzgerald T.W."/>
            <person name="Foulds N."/>
            <person name="Francis R."/>
            <person name="Gabriel G."/>
            <person name="Gerety S.S."/>
            <person name="Goodship J."/>
            <person name="Hobson E."/>
            <person name="Jones W.D."/>
            <person name="Joss S."/>
            <person name="King D."/>
            <person name="Klena N."/>
            <person name="Kumar A."/>
            <person name="Lees M."/>
            <person name="Lelliott C."/>
            <person name="Lord J."/>
            <person name="McMullan D."/>
            <person name="O'Regan M."/>
            <person name="Osio D."/>
            <person name="Piombo V."/>
            <person name="Prigmore E."/>
            <person name="Rajan D."/>
            <person name="Rosser E."/>
            <person name="Sifrim A."/>
            <person name="Smith A."/>
            <person name="Swaminathan G.J."/>
            <person name="Turnpenny P."/>
            <person name="Whitworth J."/>
            <person name="Wright C.F."/>
            <person name="Firth H.V."/>
            <person name="Barrett J.C."/>
            <person name="Lo C.W."/>
            <person name="FitzPatrick D.R."/>
            <person name="Hurles M.E."/>
        </authorList>
    </citation>
    <scope>INVOLVEMENT IN HTX7</scope>
    <scope>VARIANTS HTX7 TYR-283 AND THR-285</scope>
    <scope>FUNCTION</scope>
</reference>
<accession>Q8N119</accession>
<accession>Q5VZP9</accession>
<accession>Q8NG02</accession>
<protein>
    <recommendedName>
        <fullName>Matrix metalloproteinase-21</fullName>
        <shortName>MMP-21</shortName>
        <ecNumber>3.4.24.-</ecNumber>
    </recommendedName>
</protein>
<name>MMP21_HUMAN</name>
<organism>
    <name type="scientific">Homo sapiens</name>
    <name type="common">Human</name>
    <dbReference type="NCBI Taxonomy" id="9606"/>
    <lineage>
        <taxon>Eukaryota</taxon>
        <taxon>Metazoa</taxon>
        <taxon>Chordata</taxon>
        <taxon>Craniata</taxon>
        <taxon>Vertebrata</taxon>
        <taxon>Euteleostomi</taxon>
        <taxon>Mammalia</taxon>
        <taxon>Eutheria</taxon>
        <taxon>Euarchontoglires</taxon>
        <taxon>Primates</taxon>
        <taxon>Haplorrhini</taxon>
        <taxon>Catarrhini</taxon>
        <taxon>Hominidae</taxon>
        <taxon>Homo</taxon>
    </lineage>
</organism>
<dbReference type="EC" id="3.4.24.-"/>
<dbReference type="EMBL" id="AF331526">
    <property type="protein sequence ID" value="AAM92903.1"/>
    <property type="molecule type" value="mRNA"/>
</dbReference>
<dbReference type="EMBL" id="AY121358">
    <property type="protein sequence ID" value="AAM78033.1"/>
    <property type="molecule type" value="Genomic_DNA"/>
</dbReference>
<dbReference type="EMBL" id="AF520613">
    <property type="protein sequence ID" value="AAM75352.1"/>
    <property type="molecule type" value="mRNA"/>
</dbReference>
<dbReference type="EMBL" id="AY885252">
    <property type="protein sequence ID" value="AAW62254.1"/>
    <property type="molecule type" value="Genomic_DNA"/>
</dbReference>
<dbReference type="EMBL" id="AL158835">
    <property type="status" value="NOT_ANNOTATED_CDS"/>
    <property type="molecule type" value="Genomic_DNA"/>
</dbReference>
<dbReference type="EMBL" id="AL360176">
    <property type="status" value="NOT_ANNOTATED_CDS"/>
    <property type="molecule type" value="Genomic_DNA"/>
</dbReference>
<dbReference type="CCDS" id="CCDS7647.1"/>
<dbReference type="RefSeq" id="NP_671724.1">
    <property type="nucleotide sequence ID" value="NM_147191.1"/>
</dbReference>
<dbReference type="SMR" id="Q8N119"/>
<dbReference type="BioGRID" id="125624">
    <property type="interactions" value="2"/>
</dbReference>
<dbReference type="STRING" id="9606.ENSP00000357798"/>
<dbReference type="DrugBank" id="DB00786">
    <property type="generic name" value="Marimastat"/>
</dbReference>
<dbReference type="MEROPS" id="M10.026"/>
<dbReference type="GlyCosmos" id="Q8N119">
    <property type="glycosylation" value="1 site, No reported glycans"/>
</dbReference>
<dbReference type="GlyGen" id="Q8N119">
    <property type="glycosylation" value="2 sites"/>
</dbReference>
<dbReference type="iPTMnet" id="Q8N119"/>
<dbReference type="PhosphoSitePlus" id="Q8N119"/>
<dbReference type="BioMuta" id="MMP21"/>
<dbReference type="DMDM" id="317373390"/>
<dbReference type="MassIVE" id="Q8N119"/>
<dbReference type="PaxDb" id="9606-ENSP00000357798"/>
<dbReference type="PeptideAtlas" id="Q8N119"/>
<dbReference type="Antibodypedia" id="19175">
    <property type="antibodies" value="92 antibodies from 26 providers"/>
</dbReference>
<dbReference type="DNASU" id="118856"/>
<dbReference type="Ensembl" id="ENST00000368808.3">
    <property type="protein sequence ID" value="ENSP00000357798.3"/>
    <property type="gene ID" value="ENSG00000154485.5"/>
</dbReference>
<dbReference type="GeneID" id="118856"/>
<dbReference type="KEGG" id="hsa:118856"/>
<dbReference type="MANE-Select" id="ENST00000368808.3">
    <property type="protein sequence ID" value="ENSP00000357798.3"/>
    <property type="RefSeq nucleotide sequence ID" value="NM_147191.1"/>
    <property type="RefSeq protein sequence ID" value="NP_671724.1"/>
</dbReference>
<dbReference type="UCSC" id="uc001liu.5">
    <property type="organism name" value="human"/>
</dbReference>
<dbReference type="AGR" id="HGNC:14357"/>
<dbReference type="CTD" id="118856"/>
<dbReference type="DisGeNET" id="118856"/>
<dbReference type="GeneCards" id="MMP21"/>
<dbReference type="HGNC" id="HGNC:14357">
    <property type="gene designation" value="MMP21"/>
</dbReference>
<dbReference type="HPA" id="ENSG00000154485">
    <property type="expression patterns" value="Tissue enriched (epididymis)"/>
</dbReference>
<dbReference type="MalaCards" id="MMP21"/>
<dbReference type="MIM" id="608416">
    <property type="type" value="gene"/>
</dbReference>
<dbReference type="MIM" id="616749">
    <property type="type" value="phenotype"/>
</dbReference>
<dbReference type="neXtProt" id="NX_Q8N119"/>
<dbReference type="OpenTargets" id="ENSG00000154485"/>
<dbReference type="Orphanet" id="157769">
    <property type="disease" value="Situs ambiguus"/>
</dbReference>
<dbReference type="Orphanet" id="101063">
    <property type="disease" value="Situs inversus totalis"/>
</dbReference>
<dbReference type="PharmGKB" id="PA134885721"/>
<dbReference type="VEuPathDB" id="HostDB:ENSG00000154485"/>
<dbReference type="eggNOG" id="KOG1565">
    <property type="taxonomic scope" value="Eukaryota"/>
</dbReference>
<dbReference type="GeneTree" id="ENSGT00940000159140"/>
<dbReference type="HOGENOM" id="CLU_015489_9_0_1"/>
<dbReference type="InParanoid" id="Q8N119"/>
<dbReference type="OMA" id="CWLAAPW"/>
<dbReference type="OrthoDB" id="406838at2759"/>
<dbReference type="PAN-GO" id="Q8N119">
    <property type="GO annotations" value="4 GO annotations based on evolutionary models"/>
</dbReference>
<dbReference type="PhylomeDB" id="Q8N119"/>
<dbReference type="TreeFam" id="TF315428"/>
<dbReference type="PathwayCommons" id="Q8N119"/>
<dbReference type="SIGNOR" id="Q8N119"/>
<dbReference type="BioGRID-ORCS" id="118856">
    <property type="hits" value="10 hits in 1154 CRISPR screens"/>
</dbReference>
<dbReference type="GeneWiki" id="MMP21"/>
<dbReference type="GenomeRNAi" id="118856"/>
<dbReference type="Pharos" id="Q8N119">
    <property type="development level" value="Tbio"/>
</dbReference>
<dbReference type="PRO" id="PR:Q8N119"/>
<dbReference type="Proteomes" id="UP000005640">
    <property type="component" value="Chromosome 10"/>
</dbReference>
<dbReference type="RNAct" id="Q8N119">
    <property type="molecule type" value="protein"/>
</dbReference>
<dbReference type="Bgee" id="ENSG00000154485">
    <property type="expression patterns" value="Expressed in primordial germ cell in gonad and 97 other cell types or tissues"/>
</dbReference>
<dbReference type="ExpressionAtlas" id="Q8N119">
    <property type="expression patterns" value="baseline and differential"/>
</dbReference>
<dbReference type="GO" id="GO:0031012">
    <property type="term" value="C:extracellular matrix"/>
    <property type="evidence" value="ECO:0007669"/>
    <property type="project" value="InterPro"/>
</dbReference>
<dbReference type="GO" id="GO:0005576">
    <property type="term" value="C:extracellular region"/>
    <property type="evidence" value="ECO:0007669"/>
    <property type="project" value="UniProtKB-SubCell"/>
</dbReference>
<dbReference type="GO" id="GO:0004222">
    <property type="term" value="F:metalloendopeptidase activity"/>
    <property type="evidence" value="ECO:0000318"/>
    <property type="project" value="GO_Central"/>
</dbReference>
<dbReference type="GO" id="GO:0008270">
    <property type="term" value="F:zinc ion binding"/>
    <property type="evidence" value="ECO:0007669"/>
    <property type="project" value="InterPro"/>
</dbReference>
<dbReference type="GO" id="GO:0030574">
    <property type="term" value="P:collagen catabolic process"/>
    <property type="evidence" value="ECO:0000318"/>
    <property type="project" value="GO_Central"/>
</dbReference>
<dbReference type="GO" id="GO:0060976">
    <property type="term" value="P:coronary vasculature development"/>
    <property type="evidence" value="ECO:0007669"/>
    <property type="project" value="Ensembl"/>
</dbReference>
<dbReference type="GO" id="GO:0061371">
    <property type="term" value="P:determination of heart left/right asymmetry"/>
    <property type="evidence" value="ECO:0000250"/>
    <property type="project" value="UniProtKB"/>
</dbReference>
<dbReference type="GO" id="GO:0007368">
    <property type="term" value="P:determination of left/right symmetry"/>
    <property type="evidence" value="ECO:0000315"/>
    <property type="project" value="UniProtKB"/>
</dbReference>
<dbReference type="GO" id="GO:0030198">
    <property type="term" value="P:extracellular matrix organization"/>
    <property type="evidence" value="ECO:0000318"/>
    <property type="project" value="GO_Central"/>
</dbReference>
<dbReference type="GO" id="GO:0002244">
    <property type="term" value="P:hematopoietic progenitor cell differentiation"/>
    <property type="evidence" value="ECO:0007669"/>
    <property type="project" value="Ensembl"/>
</dbReference>
<dbReference type="GO" id="GO:0006508">
    <property type="term" value="P:proteolysis"/>
    <property type="evidence" value="ECO:0007669"/>
    <property type="project" value="UniProtKB-KW"/>
</dbReference>
<dbReference type="CDD" id="cd00094">
    <property type="entry name" value="HX"/>
    <property type="match status" value="1"/>
</dbReference>
<dbReference type="CDD" id="cd04278">
    <property type="entry name" value="ZnMc_MMP"/>
    <property type="match status" value="1"/>
</dbReference>
<dbReference type="FunFam" id="2.110.10.10:FF:000012">
    <property type="entry name" value="Matrix metallopeptidase 21"/>
    <property type="match status" value="1"/>
</dbReference>
<dbReference type="FunFam" id="2.110.10.10:FF:000015">
    <property type="entry name" value="Matrix metallopeptidase 21"/>
    <property type="match status" value="1"/>
</dbReference>
<dbReference type="FunFam" id="3.40.390.10:FF:000047">
    <property type="entry name" value="Matrix metallopeptidase 21"/>
    <property type="match status" value="1"/>
</dbReference>
<dbReference type="Gene3D" id="3.40.390.10">
    <property type="entry name" value="Collagenase (Catalytic Domain)"/>
    <property type="match status" value="1"/>
</dbReference>
<dbReference type="Gene3D" id="2.110.10.10">
    <property type="entry name" value="Hemopexin-like domain"/>
    <property type="match status" value="2"/>
</dbReference>
<dbReference type="InterPro" id="IPR000585">
    <property type="entry name" value="Hemopexin-like_dom"/>
</dbReference>
<dbReference type="InterPro" id="IPR036375">
    <property type="entry name" value="Hemopexin-like_dom_sf"/>
</dbReference>
<dbReference type="InterPro" id="IPR018487">
    <property type="entry name" value="Hemopexin-like_repeat"/>
</dbReference>
<dbReference type="InterPro" id="IPR033739">
    <property type="entry name" value="M10A_MMP"/>
</dbReference>
<dbReference type="InterPro" id="IPR024079">
    <property type="entry name" value="MetalloPept_cat_dom_sf"/>
</dbReference>
<dbReference type="InterPro" id="IPR001818">
    <property type="entry name" value="Pept_M10_metallopeptidase"/>
</dbReference>
<dbReference type="InterPro" id="IPR021190">
    <property type="entry name" value="Pept_M10A"/>
</dbReference>
<dbReference type="InterPro" id="IPR006026">
    <property type="entry name" value="Peptidase_Metallo"/>
</dbReference>
<dbReference type="InterPro" id="IPR002477">
    <property type="entry name" value="Peptidoglycan-bd-like"/>
</dbReference>
<dbReference type="InterPro" id="IPR036365">
    <property type="entry name" value="PGBD-like_sf"/>
</dbReference>
<dbReference type="PANTHER" id="PTHR10201">
    <property type="entry name" value="MATRIX METALLOPROTEINASE"/>
    <property type="match status" value="1"/>
</dbReference>
<dbReference type="PANTHER" id="PTHR10201:SF323">
    <property type="entry name" value="MATRIX METALLOPROTEINASE-21"/>
    <property type="match status" value="1"/>
</dbReference>
<dbReference type="Pfam" id="PF00045">
    <property type="entry name" value="Hemopexin"/>
    <property type="match status" value="3"/>
</dbReference>
<dbReference type="Pfam" id="PF00413">
    <property type="entry name" value="Peptidase_M10"/>
    <property type="match status" value="1"/>
</dbReference>
<dbReference type="Pfam" id="PF01471">
    <property type="entry name" value="PG_binding_1"/>
    <property type="match status" value="1"/>
</dbReference>
<dbReference type="PIRSF" id="PIRSF001191">
    <property type="entry name" value="Peptidase_M10A_matrix"/>
    <property type="match status" value="1"/>
</dbReference>
<dbReference type="PRINTS" id="PR00138">
    <property type="entry name" value="MATRIXIN"/>
</dbReference>
<dbReference type="SMART" id="SM00120">
    <property type="entry name" value="HX"/>
    <property type="match status" value="4"/>
</dbReference>
<dbReference type="SMART" id="SM00235">
    <property type="entry name" value="ZnMc"/>
    <property type="match status" value="1"/>
</dbReference>
<dbReference type="SUPFAM" id="SSF50923">
    <property type="entry name" value="Hemopexin-like domain"/>
    <property type="match status" value="1"/>
</dbReference>
<dbReference type="SUPFAM" id="SSF55486">
    <property type="entry name" value="Metalloproteases ('zincins'), catalytic domain"/>
    <property type="match status" value="1"/>
</dbReference>
<dbReference type="SUPFAM" id="SSF47090">
    <property type="entry name" value="PGBD-like"/>
    <property type="match status" value="1"/>
</dbReference>
<dbReference type="PROSITE" id="PS51642">
    <property type="entry name" value="HEMOPEXIN_2"/>
    <property type="match status" value="4"/>
</dbReference>
<dbReference type="PROSITE" id="PS00142">
    <property type="entry name" value="ZINC_PROTEASE"/>
    <property type="match status" value="1"/>
</dbReference>
<keyword id="KW-0106">Calcium</keyword>
<keyword id="KW-0165">Cleavage on pair of basic residues</keyword>
<keyword id="KW-1015">Disulfide bond</keyword>
<keyword id="KW-0325">Glycoprotein</keyword>
<keyword id="KW-1056">Heterotaxy</keyword>
<keyword id="KW-0378">Hydrolase</keyword>
<keyword id="KW-0479">Metal-binding</keyword>
<keyword id="KW-0482">Metalloprotease</keyword>
<keyword id="KW-0645">Protease</keyword>
<keyword id="KW-1185">Reference proteome</keyword>
<keyword id="KW-0677">Repeat</keyword>
<keyword id="KW-0964">Secreted</keyword>
<keyword id="KW-0732">Signal</keyword>
<keyword id="KW-0862">Zinc</keyword>
<keyword id="KW-0865">Zymogen</keyword>
<sequence length="569" mass="65043">MLAASIFRPTLLLCWLAAPWPTQPESLFHSRDRSDLEPSPLRQAKPIADLHAAQRFLSRYGWSGVWAAWGPSPEGPPETPKGAALAEAVRRFQRANALPASGELDAATLAAMNRPRCGVPDMRPPPPSAPPSPPGPPPRARSRRSPRAPLSLSRRGWQPRGYPDGGAAQAFSKRTLSWRLLGEALSSQLSVADQRRIVALAFRMWSEVTPLDFREDLAAPGAAVDIKLGFGRGRHLGCPRAFDGSGQEFAHAWRLGDIHFDDDEHFTPPTSDTGISLLKVAVHEIGHVLGLPHTYRTGSIMQPNYIPQEPAFELDWSDRKAIQKLYGSCEGSFDTAFDWIRKERNQYGEVMVRFSTYFFRNSWYWLYENRNNRTRYGDPIQILTGWPGIPTHNIDAFVHIWTWKRDERYFFQGNQYWRYDSDKDQALTEDEQGKSYPKLISEGFPGIPSPLDTAFYDRRQKLIYFFKESLVFAFDVNRNRVLNSYPKRITEVFPAVIPQNHPFRNIDSAYYSYAYNSIFFFKGNAYWKVVNDKDKQQNSWLPANGLFPKKFISEKWFDVCDVHISTLNM</sequence>